<accession>C3P1X2</accession>
<gene>
    <name evidence="1" type="primary">lutA2</name>
    <name type="ordered locus">BAA_3313</name>
</gene>
<protein>
    <recommendedName>
        <fullName evidence="1">Lactate utilization protein A 2</fullName>
    </recommendedName>
</protein>
<proteinExistence type="inferred from homology"/>
<feature type="chain" id="PRO_0000384018" description="Lactate utilization protein A 2">
    <location>
        <begin position="1"/>
        <end position="242"/>
    </location>
</feature>
<name>LUTA2_BACAA</name>
<reference key="1">
    <citation type="submission" date="2009-04" db="EMBL/GenBank/DDBJ databases">
        <title>Genome sequence of Bacillus anthracis A0248.</title>
        <authorList>
            <person name="Dodson R.J."/>
            <person name="Munk A.C."/>
            <person name="Bruce D."/>
            <person name="Detter C."/>
            <person name="Tapia R."/>
            <person name="Sutton G."/>
            <person name="Sims D."/>
            <person name="Brettin T."/>
        </authorList>
    </citation>
    <scope>NUCLEOTIDE SEQUENCE [LARGE SCALE GENOMIC DNA]</scope>
    <source>
        <strain>A0248</strain>
    </source>
</reference>
<sequence length="242" mass="27046">MKVSLFITCLSDVFFPQVGKSVVEIMNQCGVELDFPEGQTCCGQPAYNSGYQEDAKLAAKQMIKAFEHSEYIVTPSGSCASMVHHYYKEMFKGDSEWYEKAVHLADRTYELTDFVVNILGKNDWKSKLVEKAVFHQSCHMSRALGIKEEPLKLLSQVEGLDIKELPYCQDCCGFGGTFAVKMSSISETMVDEKIKHIEATEANLLIGADMGCLMNIGGRLRRENKNIQVLHVAEVLAKGLNK</sequence>
<organism>
    <name type="scientific">Bacillus anthracis (strain A0248)</name>
    <dbReference type="NCBI Taxonomy" id="592021"/>
    <lineage>
        <taxon>Bacteria</taxon>
        <taxon>Bacillati</taxon>
        <taxon>Bacillota</taxon>
        <taxon>Bacilli</taxon>
        <taxon>Bacillales</taxon>
        <taxon>Bacillaceae</taxon>
        <taxon>Bacillus</taxon>
        <taxon>Bacillus cereus group</taxon>
    </lineage>
</organism>
<evidence type="ECO:0000255" key="1">
    <source>
        <dbReference type="HAMAP-Rule" id="MF_02105"/>
    </source>
</evidence>
<comment type="function">
    <text evidence="1">Is involved in L-lactate degradation and allows cells to grow with lactate as the sole carbon source.</text>
</comment>
<comment type="similarity">
    <text evidence="1">Belongs to the LutA/YkgE family.</text>
</comment>
<dbReference type="EMBL" id="CP001598">
    <property type="protein sequence ID" value="ACQ50218.1"/>
    <property type="molecule type" value="Genomic_DNA"/>
</dbReference>
<dbReference type="RefSeq" id="WP_000868791.1">
    <property type="nucleotide sequence ID" value="NC_012659.1"/>
</dbReference>
<dbReference type="SMR" id="C3P1X2"/>
<dbReference type="GeneID" id="45023043"/>
<dbReference type="KEGG" id="bai:BAA_3313"/>
<dbReference type="HOGENOM" id="CLU_023081_1_0_9"/>
<dbReference type="GO" id="GO:0005829">
    <property type="term" value="C:cytosol"/>
    <property type="evidence" value="ECO:0007669"/>
    <property type="project" value="TreeGrafter"/>
</dbReference>
<dbReference type="GO" id="GO:0016491">
    <property type="term" value="F:oxidoreductase activity"/>
    <property type="evidence" value="ECO:0007669"/>
    <property type="project" value="UniProtKB-ARBA"/>
</dbReference>
<dbReference type="GO" id="GO:0006089">
    <property type="term" value="P:lactate metabolic process"/>
    <property type="evidence" value="ECO:0007669"/>
    <property type="project" value="UniProtKB-UniRule"/>
</dbReference>
<dbReference type="HAMAP" id="MF_02105">
    <property type="entry name" value="LutA"/>
    <property type="match status" value="1"/>
</dbReference>
<dbReference type="InterPro" id="IPR004017">
    <property type="entry name" value="Cys_rich_dom"/>
</dbReference>
<dbReference type="InterPro" id="IPR022822">
    <property type="entry name" value="LutA"/>
</dbReference>
<dbReference type="PANTHER" id="PTHR30296:SF0">
    <property type="entry name" value="LACTATE UTILIZATION PROTEIN A"/>
    <property type="match status" value="1"/>
</dbReference>
<dbReference type="PANTHER" id="PTHR30296">
    <property type="entry name" value="UNCHARACTERIZED PROTEIN YKGE"/>
    <property type="match status" value="1"/>
</dbReference>
<dbReference type="Pfam" id="PF02754">
    <property type="entry name" value="CCG"/>
    <property type="match status" value="2"/>
</dbReference>